<protein>
    <recommendedName>
        <fullName evidence="1">DNA ligase</fullName>
        <ecNumber evidence="1">6.5.1.2</ecNumber>
    </recommendedName>
    <alternativeName>
        <fullName evidence="1">Polydeoxyribonucleotide synthase [NAD(+)]</fullName>
    </alternativeName>
</protein>
<proteinExistence type="inferred from homology"/>
<sequence>MAAKSKKPLPSVDQLTKAQAKVEHKRLALEIAMHDERYYQKDAPTVSDAAYDSLRQRLNAVEARFPELVTTDSPSQKVGAQPSRAFAKIRHAVPMLSLGNAFSDEEVAEFVARVRRFLNLGADEPLAVVAEPKIDGLSLSLRYENGELVNAATRGDGFEGEDVTANVRTIKDVPHKLKGKNIPAVCEVRGEVYMLREDFLTLNKKQADSGDTIFANPRNSAAGSLRQKNVAITASRPLKFFAYAWGEMSAMPATTQFEMVKWFEKAGFAVNPRMILCRDVEALLRYYREIETERAQLSYDIDGVVYKVDRLDWQTRLGFVSRSPRWAIAHKFAAEQATTVLEKIDIQVGRTGALTPVARLAAVTVGGVVVQNATLHNEDEIARKDIREGDTVVIQRAGDVIPQVVSVVTDKRPKHAKPYSFPHVCPVCGSHAVREEGEAVRRCTGALICPAQAVERLKHFVSRLAFDIEGLGDKQIHEFYDAKLIMHPVDIFTLAKRDAHATDKLKDREGYGDVSVRNLFAAIDARRRIELNRLIFALGIRHVGEGNAKLLARHYGTIENFRAAMAEAAAAQTEEGNPSEAYADLNAIGGVGDIVADAVVEFFAEERNVKALNELLHEIEVLPAEQVRADSAVAGKTVVFTGSLTKFTREEAKAQAERLGAKVSGSVSKKTDYVVAGEEAGSKLTKARELGVAVLTEDEWLKLIEG</sequence>
<name>DNLJ_AFIC5</name>
<evidence type="ECO:0000255" key="1">
    <source>
        <dbReference type="HAMAP-Rule" id="MF_01588"/>
    </source>
</evidence>
<evidence type="ECO:0000305" key="2"/>
<feature type="chain" id="PRO_0000380433" description="DNA ligase">
    <location>
        <begin position="1"/>
        <end position="706"/>
    </location>
</feature>
<feature type="domain" description="BRCT" evidence="1">
    <location>
        <begin position="628"/>
        <end position="706"/>
    </location>
</feature>
<feature type="active site" description="N6-AMP-lysine intermediate" evidence="1">
    <location>
        <position position="133"/>
    </location>
</feature>
<feature type="binding site" evidence="1">
    <location>
        <begin position="48"/>
        <end position="52"/>
    </location>
    <ligand>
        <name>NAD(+)</name>
        <dbReference type="ChEBI" id="CHEBI:57540"/>
    </ligand>
</feature>
<feature type="binding site" evidence="1">
    <location>
        <begin position="97"/>
        <end position="98"/>
    </location>
    <ligand>
        <name>NAD(+)</name>
        <dbReference type="ChEBI" id="CHEBI:57540"/>
    </ligand>
</feature>
<feature type="binding site" evidence="1">
    <location>
        <position position="131"/>
    </location>
    <ligand>
        <name>NAD(+)</name>
        <dbReference type="ChEBI" id="CHEBI:57540"/>
    </ligand>
</feature>
<feature type="binding site" evidence="1">
    <location>
        <position position="154"/>
    </location>
    <ligand>
        <name>NAD(+)</name>
        <dbReference type="ChEBI" id="CHEBI:57540"/>
    </ligand>
</feature>
<feature type="binding site" evidence="1">
    <location>
        <position position="191"/>
    </location>
    <ligand>
        <name>NAD(+)</name>
        <dbReference type="ChEBI" id="CHEBI:57540"/>
    </ligand>
</feature>
<feature type="binding site" evidence="1">
    <location>
        <position position="307"/>
    </location>
    <ligand>
        <name>NAD(+)</name>
        <dbReference type="ChEBI" id="CHEBI:57540"/>
    </ligand>
</feature>
<feature type="binding site" evidence="1">
    <location>
        <position position="331"/>
    </location>
    <ligand>
        <name>NAD(+)</name>
        <dbReference type="ChEBI" id="CHEBI:57540"/>
    </ligand>
</feature>
<feature type="binding site" evidence="1">
    <location>
        <position position="425"/>
    </location>
    <ligand>
        <name>Zn(2+)</name>
        <dbReference type="ChEBI" id="CHEBI:29105"/>
    </ligand>
</feature>
<feature type="binding site" evidence="1">
    <location>
        <position position="428"/>
    </location>
    <ligand>
        <name>Zn(2+)</name>
        <dbReference type="ChEBI" id="CHEBI:29105"/>
    </ligand>
</feature>
<feature type="binding site" evidence="1">
    <location>
        <position position="443"/>
    </location>
    <ligand>
        <name>Zn(2+)</name>
        <dbReference type="ChEBI" id="CHEBI:29105"/>
    </ligand>
</feature>
<feature type="binding site" evidence="1">
    <location>
        <position position="449"/>
    </location>
    <ligand>
        <name>Zn(2+)</name>
        <dbReference type="ChEBI" id="CHEBI:29105"/>
    </ligand>
</feature>
<dbReference type="EC" id="6.5.1.2" evidence="1"/>
<dbReference type="EMBL" id="CP001196">
    <property type="protein sequence ID" value="ACI92386.1"/>
    <property type="molecule type" value="Genomic_DNA"/>
</dbReference>
<dbReference type="EMBL" id="CP002826">
    <property type="protein sequence ID" value="AEI07409.1"/>
    <property type="status" value="ALT_INIT"/>
    <property type="molecule type" value="Genomic_DNA"/>
</dbReference>
<dbReference type="SMR" id="B6JB45"/>
<dbReference type="STRING" id="504832.OCA5_c27150"/>
<dbReference type="KEGG" id="oca:OCAR_5254"/>
<dbReference type="KEGG" id="ocg:OCA5_c27150"/>
<dbReference type="PATRIC" id="fig|504832.7.peg.2871"/>
<dbReference type="eggNOG" id="COG0272">
    <property type="taxonomic scope" value="Bacteria"/>
</dbReference>
<dbReference type="HOGENOM" id="CLU_007764_2_0_5"/>
<dbReference type="Proteomes" id="UP000007730">
    <property type="component" value="Chromosome"/>
</dbReference>
<dbReference type="GO" id="GO:0005829">
    <property type="term" value="C:cytosol"/>
    <property type="evidence" value="ECO:0007669"/>
    <property type="project" value="TreeGrafter"/>
</dbReference>
<dbReference type="GO" id="GO:0003911">
    <property type="term" value="F:DNA ligase (NAD+) activity"/>
    <property type="evidence" value="ECO:0007669"/>
    <property type="project" value="UniProtKB-UniRule"/>
</dbReference>
<dbReference type="GO" id="GO:0046872">
    <property type="term" value="F:metal ion binding"/>
    <property type="evidence" value="ECO:0007669"/>
    <property type="project" value="UniProtKB-KW"/>
</dbReference>
<dbReference type="GO" id="GO:0006281">
    <property type="term" value="P:DNA repair"/>
    <property type="evidence" value="ECO:0007669"/>
    <property type="project" value="UniProtKB-KW"/>
</dbReference>
<dbReference type="GO" id="GO:0006260">
    <property type="term" value="P:DNA replication"/>
    <property type="evidence" value="ECO:0007669"/>
    <property type="project" value="UniProtKB-KW"/>
</dbReference>
<dbReference type="CDD" id="cd17748">
    <property type="entry name" value="BRCT_DNA_ligase_like"/>
    <property type="match status" value="1"/>
</dbReference>
<dbReference type="CDD" id="cd00114">
    <property type="entry name" value="LIGANc"/>
    <property type="match status" value="1"/>
</dbReference>
<dbReference type="FunFam" id="2.40.50.140:FF:000012">
    <property type="entry name" value="DNA ligase"/>
    <property type="match status" value="1"/>
</dbReference>
<dbReference type="FunFam" id="3.30.470.30:FF:000001">
    <property type="entry name" value="DNA ligase"/>
    <property type="match status" value="1"/>
</dbReference>
<dbReference type="Gene3D" id="6.20.10.30">
    <property type="match status" value="1"/>
</dbReference>
<dbReference type="Gene3D" id="1.10.150.20">
    <property type="entry name" value="5' to 3' exonuclease, C-terminal subdomain"/>
    <property type="match status" value="2"/>
</dbReference>
<dbReference type="Gene3D" id="3.40.50.10190">
    <property type="entry name" value="BRCT domain"/>
    <property type="match status" value="1"/>
</dbReference>
<dbReference type="Gene3D" id="3.30.470.30">
    <property type="entry name" value="DNA ligase/mRNA capping enzyme"/>
    <property type="match status" value="1"/>
</dbReference>
<dbReference type="Gene3D" id="1.10.287.610">
    <property type="entry name" value="Helix hairpin bin"/>
    <property type="match status" value="1"/>
</dbReference>
<dbReference type="Gene3D" id="2.40.50.140">
    <property type="entry name" value="Nucleic acid-binding proteins"/>
    <property type="match status" value="1"/>
</dbReference>
<dbReference type="HAMAP" id="MF_01588">
    <property type="entry name" value="DNA_ligase_A"/>
    <property type="match status" value="1"/>
</dbReference>
<dbReference type="InterPro" id="IPR001357">
    <property type="entry name" value="BRCT_dom"/>
</dbReference>
<dbReference type="InterPro" id="IPR036420">
    <property type="entry name" value="BRCT_dom_sf"/>
</dbReference>
<dbReference type="InterPro" id="IPR041663">
    <property type="entry name" value="DisA/LigA_HHH"/>
</dbReference>
<dbReference type="InterPro" id="IPR001679">
    <property type="entry name" value="DNA_ligase"/>
</dbReference>
<dbReference type="InterPro" id="IPR018239">
    <property type="entry name" value="DNA_ligase_AS"/>
</dbReference>
<dbReference type="InterPro" id="IPR013839">
    <property type="entry name" value="DNAligase_adenylation"/>
</dbReference>
<dbReference type="InterPro" id="IPR013840">
    <property type="entry name" value="DNAligase_N"/>
</dbReference>
<dbReference type="InterPro" id="IPR012340">
    <property type="entry name" value="NA-bd_OB-fold"/>
</dbReference>
<dbReference type="InterPro" id="IPR004150">
    <property type="entry name" value="NAD_DNA_ligase_OB"/>
</dbReference>
<dbReference type="InterPro" id="IPR010994">
    <property type="entry name" value="RuvA_2-like"/>
</dbReference>
<dbReference type="InterPro" id="IPR004149">
    <property type="entry name" value="Znf_DNAligase_C4"/>
</dbReference>
<dbReference type="NCBIfam" id="TIGR00575">
    <property type="entry name" value="dnlj"/>
    <property type="match status" value="1"/>
</dbReference>
<dbReference type="NCBIfam" id="NF005932">
    <property type="entry name" value="PRK07956.1"/>
    <property type="match status" value="1"/>
</dbReference>
<dbReference type="PANTHER" id="PTHR23389">
    <property type="entry name" value="CHROMOSOME TRANSMISSION FIDELITY FACTOR 18"/>
    <property type="match status" value="1"/>
</dbReference>
<dbReference type="PANTHER" id="PTHR23389:SF9">
    <property type="entry name" value="DNA LIGASE"/>
    <property type="match status" value="1"/>
</dbReference>
<dbReference type="Pfam" id="PF00533">
    <property type="entry name" value="BRCT"/>
    <property type="match status" value="1"/>
</dbReference>
<dbReference type="Pfam" id="PF01653">
    <property type="entry name" value="DNA_ligase_aden"/>
    <property type="match status" value="1"/>
</dbReference>
<dbReference type="Pfam" id="PF03120">
    <property type="entry name" value="DNA_ligase_OB"/>
    <property type="match status" value="1"/>
</dbReference>
<dbReference type="Pfam" id="PF03119">
    <property type="entry name" value="DNA_ligase_ZBD"/>
    <property type="match status" value="1"/>
</dbReference>
<dbReference type="Pfam" id="PF12826">
    <property type="entry name" value="HHH_2"/>
    <property type="match status" value="1"/>
</dbReference>
<dbReference type="PIRSF" id="PIRSF001604">
    <property type="entry name" value="LigA"/>
    <property type="match status" value="1"/>
</dbReference>
<dbReference type="SMART" id="SM00292">
    <property type="entry name" value="BRCT"/>
    <property type="match status" value="1"/>
</dbReference>
<dbReference type="SMART" id="SM00532">
    <property type="entry name" value="LIGANc"/>
    <property type="match status" value="1"/>
</dbReference>
<dbReference type="SUPFAM" id="SSF52113">
    <property type="entry name" value="BRCT domain"/>
    <property type="match status" value="1"/>
</dbReference>
<dbReference type="SUPFAM" id="SSF56091">
    <property type="entry name" value="DNA ligase/mRNA capping enzyme, catalytic domain"/>
    <property type="match status" value="1"/>
</dbReference>
<dbReference type="SUPFAM" id="SSF50249">
    <property type="entry name" value="Nucleic acid-binding proteins"/>
    <property type="match status" value="1"/>
</dbReference>
<dbReference type="SUPFAM" id="SSF47781">
    <property type="entry name" value="RuvA domain 2-like"/>
    <property type="match status" value="1"/>
</dbReference>
<dbReference type="PROSITE" id="PS50172">
    <property type="entry name" value="BRCT"/>
    <property type="match status" value="1"/>
</dbReference>
<dbReference type="PROSITE" id="PS01055">
    <property type="entry name" value="DNA_LIGASE_N1"/>
    <property type="match status" value="1"/>
</dbReference>
<gene>
    <name evidence="1" type="primary">ligA</name>
    <name type="ordered locus">OCAR_5254</name>
    <name type="ordered locus">OCA5_c27150</name>
</gene>
<comment type="function">
    <text evidence="1">DNA ligase that catalyzes the formation of phosphodiester linkages between 5'-phosphoryl and 3'-hydroxyl groups in double-stranded DNA using NAD as a coenzyme and as the energy source for the reaction. It is essential for DNA replication and repair of damaged DNA.</text>
</comment>
<comment type="catalytic activity">
    <reaction evidence="1">
        <text>NAD(+) + (deoxyribonucleotide)n-3'-hydroxyl + 5'-phospho-(deoxyribonucleotide)m = (deoxyribonucleotide)n+m + AMP + beta-nicotinamide D-nucleotide.</text>
        <dbReference type="EC" id="6.5.1.2"/>
    </reaction>
</comment>
<comment type="cofactor">
    <cofactor evidence="1">
        <name>Mg(2+)</name>
        <dbReference type="ChEBI" id="CHEBI:18420"/>
    </cofactor>
    <cofactor evidence="1">
        <name>Mn(2+)</name>
        <dbReference type="ChEBI" id="CHEBI:29035"/>
    </cofactor>
</comment>
<comment type="similarity">
    <text evidence="1">Belongs to the NAD-dependent DNA ligase family. LigA subfamily.</text>
</comment>
<comment type="sequence caution" evidence="2">
    <conflict type="erroneous initiation">
        <sequence resource="EMBL-CDS" id="AEI07409"/>
    </conflict>
    <text>Extended N-terminus.</text>
</comment>
<keyword id="KW-0227">DNA damage</keyword>
<keyword id="KW-0234">DNA repair</keyword>
<keyword id="KW-0235">DNA replication</keyword>
<keyword id="KW-0436">Ligase</keyword>
<keyword id="KW-0460">Magnesium</keyword>
<keyword id="KW-0464">Manganese</keyword>
<keyword id="KW-0479">Metal-binding</keyword>
<keyword id="KW-0520">NAD</keyword>
<keyword id="KW-1185">Reference proteome</keyword>
<keyword id="KW-0862">Zinc</keyword>
<reference key="1">
    <citation type="journal article" date="2008" name="J. Bacteriol.">
        <title>Genome sequence of the chemolithoautotrophic bacterium Oligotropha carboxidovorans OM5T.</title>
        <authorList>
            <person name="Paul D."/>
            <person name="Bridges S."/>
            <person name="Burgess S.C."/>
            <person name="Dandass Y."/>
            <person name="Lawrence M.L."/>
        </authorList>
    </citation>
    <scope>NUCLEOTIDE SEQUENCE [LARGE SCALE GENOMIC DNA]</scope>
    <source>
        <strain>ATCC 49405 / DSM 1227 / KCTC 32145 / OM5</strain>
    </source>
</reference>
<reference key="2">
    <citation type="journal article" date="2011" name="J. Bacteriol.">
        <title>Complete genome sequences of the chemolithoautotrophic Oligotropha carboxidovorans strains OM4 and OM5.</title>
        <authorList>
            <person name="Volland S."/>
            <person name="Rachinger M."/>
            <person name="Strittmatter A."/>
            <person name="Daniel R."/>
            <person name="Gottschalk G."/>
            <person name="Meyer O."/>
        </authorList>
    </citation>
    <scope>NUCLEOTIDE SEQUENCE [LARGE SCALE GENOMIC DNA]</scope>
    <source>
        <strain>ATCC 49405 / DSM 1227 / KCTC 32145 / OM5</strain>
    </source>
</reference>
<organism>
    <name type="scientific">Afipia carboxidovorans (strain ATCC 49405 / DSM 1227 / KCTC 32145 / OM5)</name>
    <name type="common">Oligotropha carboxidovorans</name>
    <dbReference type="NCBI Taxonomy" id="504832"/>
    <lineage>
        <taxon>Bacteria</taxon>
        <taxon>Pseudomonadati</taxon>
        <taxon>Pseudomonadota</taxon>
        <taxon>Alphaproteobacteria</taxon>
        <taxon>Hyphomicrobiales</taxon>
        <taxon>Nitrobacteraceae</taxon>
        <taxon>Afipia</taxon>
    </lineage>
</organism>
<accession>B6JB45</accession>
<accession>F8BV54</accession>